<name>VPR_SIVM1</name>
<accession>P05958</accession>
<keyword id="KW-0010">Activator</keyword>
<keyword id="KW-0014">AIDS</keyword>
<keyword id="KW-0131">Cell cycle</keyword>
<keyword id="KW-1048">Host nucleus</keyword>
<keyword id="KW-0945">Host-virus interaction</keyword>
<keyword id="KW-0597">Phosphoprotein</keyword>
<keyword id="KW-0804">Transcription</keyword>
<keyword id="KW-0805">Transcription regulation</keyword>
<keyword id="KW-1163">Viral penetration into host nucleus</keyword>
<keyword id="KW-0946">Virion</keyword>
<keyword id="KW-1160">Virus entry into host cell</keyword>
<proteinExistence type="inferred from homology"/>
<comment type="function">
    <text evidence="1">Stimulates gene expression driven by the HIV-2 LTR. Prevents infected cells from undergoing mitosis and proliferating, by inducing arrest or delay in the G2 phase of the cell cycle. Cell cycle arrest creates a favorable environment for maximizing viral expression and production (By similarity).</text>
</comment>
<comment type="subunit">
    <text evidence="1">Interacts with human UNG.</text>
</comment>
<comment type="subcellular location">
    <subcellularLocation>
        <location>Virion</location>
    </subcellularLocation>
    <subcellularLocation>
        <location evidence="1">Host nucleus</location>
    </subcellularLocation>
</comment>
<comment type="miscellaneous">
    <text>This is a macaque isolate.</text>
</comment>
<sequence length="101" mass="11461">MEERPPENEGPQREPWDEWVVEVLKELKEEALKHFDPRLLTALGNHIYNRHGDTLEGAGELIRILQRALFIHFRSGCSHSRIGQPGGGNPLSTIPPSRSML</sequence>
<reference key="1">
    <citation type="journal article" date="1987" name="Nature">
        <title>Sequence of simian immunodeficiency virus from macaque and its relationship to other human and simian retroviruses.</title>
        <authorList>
            <person name="Chakrabarti L."/>
            <person name="Guyader M."/>
            <person name="Alizon M."/>
            <person name="Daniel M.D."/>
            <person name="Desrosiers R.C."/>
            <person name="Tiollais P."/>
            <person name="Sonigo P."/>
        </authorList>
    </citation>
    <scope>NUCLEOTIDE SEQUENCE [GENOMIC DNA]</scope>
</reference>
<evidence type="ECO:0000250" key="1"/>
<evidence type="ECO:0000256" key="2">
    <source>
        <dbReference type="SAM" id="MobiDB-lite"/>
    </source>
</evidence>
<organism>
    <name type="scientific">Simian immunodeficiency virus (isolate Mm142-83)</name>
    <name type="common">SIV-mac</name>
    <name type="synonym">Simian immunodeficiency virus rhesus monkey</name>
    <dbReference type="NCBI Taxonomy" id="11733"/>
    <lineage>
        <taxon>Viruses</taxon>
        <taxon>Riboviria</taxon>
        <taxon>Pararnavirae</taxon>
        <taxon>Artverviricota</taxon>
        <taxon>Revtraviricetes</taxon>
        <taxon>Ortervirales</taxon>
        <taxon>Retroviridae</taxon>
        <taxon>Orthoretrovirinae</taxon>
        <taxon>Lentivirus</taxon>
        <taxon>Simian immunodeficiency virus</taxon>
    </lineage>
</organism>
<organismHost>
    <name type="scientific">Cercopithecidae</name>
    <name type="common">Old World monkeys</name>
    <dbReference type="NCBI Taxonomy" id="9527"/>
</organismHost>
<protein>
    <recommendedName>
        <fullName>Protein Vpr</fullName>
    </recommendedName>
    <alternativeName>
        <fullName>R ORF protein</fullName>
    </alternativeName>
    <alternativeName>
        <fullName>Viral protein R</fullName>
    </alternativeName>
</protein>
<feature type="chain" id="PRO_0000085466" description="Protein Vpr">
    <location>
        <begin position="1"/>
        <end position="101"/>
    </location>
</feature>
<feature type="region of interest" description="Disordered" evidence="2">
    <location>
        <begin position="81"/>
        <end position="101"/>
    </location>
</feature>
<feature type="compositionally biased region" description="Polar residues" evidence="2">
    <location>
        <begin position="90"/>
        <end position="101"/>
    </location>
</feature>
<feature type="modified residue" description="Phosphoserine; by host" evidence="1">
    <location>
        <position position="80"/>
    </location>
</feature>
<gene>
    <name type="primary">vpr</name>
</gene>
<dbReference type="EMBL" id="Y00277">
    <property type="protein sequence ID" value="CAA68383.1"/>
    <property type="molecule type" value="Genomic_DNA"/>
</dbReference>
<dbReference type="SMR" id="P05958"/>
<dbReference type="DIP" id="DIP-60887N"/>
<dbReference type="IntAct" id="P05958">
    <property type="interactions" value="1"/>
</dbReference>
<dbReference type="Proteomes" id="UP000007220">
    <property type="component" value="Segment"/>
</dbReference>
<dbReference type="GO" id="GO:0043657">
    <property type="term" value="C:host cell"/>
    <property type="evidence" value="ECO:0007669"/>
    <property type="project" value="GOC"/>
</dbReference>
<dbReference type="GO" id="GO:0042025">
    <property type="term" value="C:host cell nucleus"/>
    <property type="evidence" value="ECO:0007669"/>
    <property type="project" value="UniProtKB-SubCell"/>
</dbReference>
<dbReference type="GO" id="GO:0044423">
    <property type="term" value="C:virion component"/>
    <property type="evidence" value="ECO:0007669"/>
    <property type="project" value="UniProtKB-KW"/>
</dbReference>
<dbReference type="GO" id="GO:0046718">
    <property type="term" value="P:symbiont entry into host cell"/>
    <property type="evidence" value="ECO:0007669"/>
    <property type="project" value="UniProtKB-KW"/>
</dbReference>
<dbReference type="GO" id="GO:0075732">
    <property type="term" value="P:viral penetration into host nucleus"/>
    <property type="evidence" value="ECO:0007669"/>
    <property type="project" value="UniProtKB-KW"/>
</dbReference>
<dbReference type="Gene3D" id="6.10.210.10">
    <property type="match status" value="1"/>
</dbReference>
<dbReference type="Gene3D" id="1.20.5.90">
    <property type="entry name" value="VpR/VpX protein, C-terminal domain"/>
    <property type="match status" value="1"/>
</dbReference>
<dbReference type="InterPro" id="IPR000012">
    <property type="entry name" value="RetroV_VpR/X"/>
</dbReference>
<dbReference type="Pfam" id="PF00522">
    <property type="entry name" value="VPR"/>
    <property type="match status" value="1"/>
</dbReference>
<dbReference type="PRINTS" id="PR00444">
    <property type="entry name" value="HIVVPRVPX"/>
</dbReference>